<sequence length="345" mass="38267">MISPVLILFSSFLCHVAIAGRTCPKPDDLPFSTVVPLKTFYEPGEEITYSCKPGYVSRGGMRKFICPLTGLWPINTLKCTPRVCPFAGILENGAVRYTTFEYPNTISFSCNTGFYLNGADSAKCTEEGKWSPELPVCAPITCPPPSIPTFATLHVYKPSAGNNSLYRDTAVFECLPQHAMFGNDTITCTTHGNWTKLPECREVKCPFPSRPDNGFVNYPAKPTLYYKDKATFGCHDGYSLDGPEEIECTKLGNWSAMPSCKASCKVPVKKATVVYQGERVKIQEKFKNGMLHGDKVSFFCKNKEKKCSYTEDAQCIDGTIEVPKCFKEHSSLAFWKTDASDVKPC</sequence>
<feature type="signal peptide" evidence="1">
    <location>
        <begin position="1"/>
        <end position="19"/>
    </location>
</feature>
<feature type="chain" id="PRO_0000002061" description="Beta-2-glycoprotein 1">
    <location>
        <begin position="20"/>
        <end position="345"/>
    </location>
</feature>
<feature type="domain" description="Sushi 1" evidence="4">
    <location>
        <begin position="21"/>
        <end position="81"/>
    </location>
</feature>
<feature type="domain" description="Sushi 2" evidence="4">
    <location>
        <begin position="82"/>
        <end position="139"/>
    </location>
</feature>
<feature type="domain" description="Sushi 3" evidence="4">
    <location>
        <begin position="140"/>
        <end position="202"/>
    </location>
</feature>
<feature type="domain" description="Sushi 4" evidence="4">
    <location>
        <begin position="203"/>
        <end position="262"/>
    </location>
</feature>
<feature type="region of interest" description="Sushi-like">
    <location>
        <begin position="263"/>
        <end position="345"/>
    </location>
</feature>
<feature type="glycosylation site" description="O-linked (GalNAc...) threonine" evidence="2">
    <location>
        <position position="33"/>
    </location>
</feature>
<feature type="glycosylation site" description="O-linked (GalNAc...) threonine" evidence="1">
    <location>
        <position position="149"/>
    </location>
</feature>
<feature type="glycosylation site" description="N-linked (GlcNAc...) asparagine" evidence="3">
    <location>
        <position position="162"/>
    </location>
</feature>
<feature type="glycosylation site" description="N-linked (GlcNAc...) asparagine" evidence="3">
    <location>
        <position position="183"/>
    </location>
</feature>
<feature type="glycosylation site" description="N-linked (GlcNAc...) asparagine" evidence="3">
    <location>
        <position position="193"/>
    </location>
</feature>
<feature type="glycosylation site" description="N-linked (GlcNAc...) asparagine" evidence="3">
    <location>
        <position position="253"/>
    </location>
</feature>
<feature type="disulfide bond" evidence="4">
    <location>
        <begin position="23"/>
        <end position="66"/>
    </location>
</feature>
<feature type="disulfide bond" evidence="4">
    <location>
        <begin position="51"/>
        <end position="79"/>
    </location>
</feature>
<feature type="disulfide bond" evidence="4">
    <location>
        <begin position="84"/>
        <end position="124"/>
    </location>
</feature>
<feature type="disulfide bond" evidence="4">
    <location>
        <begin position="110"/>
        <end position="137"/>
    </location>
</feature>
<feature type="disulfide bond" evidence="4">
    <location>
        <begin position="142"/>
        <end position="188"/>
    </location>
</feature>
<feature type="disulfide bond" evidence="4">
    <location>
        <begin position="174"/>
        <end position="200"/>
    </location>
</feature>
<feature type="disulfide bond" evidence="4">
    <location>
        <begin position="205"/>
        <end position="248"/>
    </location>
</feature>
<feature type="disulfide bond" evidence="4">
    <location>
        <begin position="234"/>
        <end position="260"/>
    </location>
</feature>
<feature type="disulfide bond" evidence="4">
    <location>
        <begin position="264"/>
        <end position="315"/>
    </location>
</feature>
<feature type="disulfide bond" evidence="4">
    <location>
        <begin position="300"/>
        <end position="325"/>
    </location>
</feature>
<feature type="disulfide bond" evidence="4">
    <location>
        <begin position="307"/>
        <end position="345"/>
    </location>
</feature>
<feature type="sequence variant" id="VAR_018697" description="In allele APOH*4." evidence="5">
    <original>K</original>
    <variation>E</variation>
    <location>
        <position position="229"/>
    </location>
</feature>
<gene>
    <name type="primary">APOH</name>
</gene>
<name>APOH_PANTR</name>
<dbReference type="EMBL" id="AF358415">
    <property type="protein sequence ID" value="AAK71538.1"/>
    <property type="molecule type" value="Genomic_DNA"/>
</dbReference>
<dbReference type="EMBL" id="AF358408">
    <property type="protein sequence ID" value="AAK71538.1"/>
    <property type="status" value="JOINED"/>
    <property type="molecule type" value="Genomic_DNA"/>
</dbReference>
<dbReference type="EMBL" id="AF358409">
    <property type="protein sequence ID" value="AAK71538.1"/>
    <property type="status" value="JOINED"/>
    <property type="molecule type" value="Genomic_DNA"/>
</dbReference>
<dbReference type="EMBL" id="AF358410">
    <property type="protein sequence ID" value="AAK71538.1"/>
    <property type="status" value="JOINED"/>
    <property type="molecule type" value="Genomic_DNA"/>
</dbReference>
<dbReference type="EMBL" id="AF358411">
    <property type="protein sequence ID" value="AAK71538.1"/>
    <property type="status" value="JOINED"/>
    <property type="molecule type" value="Genomic_DNA"/>
</dbReference>
<dbReference type="EMBL" id="AF358412">
    <property type="protein sequence ID" value="AAK71538.1"/>
    <property type="status" value="JOINED"/>
    <property type="molecule type" value="Genomic_DNA"/>
</dbReference>
<dbReference type="EMBL" id="AF358413">
    <property type="protein sequence ID" value="AAK71538.1"/>
    <property type="status" value="JOINED"/>
    <property type="molecule type" value="Genomic_DNA"/>
</dbReference>
<dbReference type="EMBL" id="AF358414">
    <property type="protein sequence ID" value="AAK71538.1"/>
    <property type="status" value="JOINED"/>
    <property type="molecule type" value="Genomic_DNA"/>
</dbReference>
<dbReference type="RefSeq" id="NP_001009118.1">
    <property type="nucleotide sequence ID" value="NM_001009118.3"/>
</dbReference>
<dbReference type="RefSeq" id="XP_063654162.1">
    <property type="nucleotide sequence ID" value="XM_063798092.1"/>
</dbReference>
<dbReference type="RefSeq" id="XP_063654163.1">
    <property type="nucleotide sequence ID" value="XM_063798093.1"/>
</dbReference>
<dbReference type="RefSeq" id="XP_063654164.1">
    <property type="nucleotide sequence ID" value="XM_063798094.1"/>
</dbReference>
<dbReference type="BMRB" id="Q95LB0"/>
<dbReference type="SMR" id="Q95LB0"/>
<dbReference type="FunCoup" id="Q95LB0">
    <property type="interactions" value="48"/>
</dbReference>
<dbReference type="STRING" id="9598.ENSPTRP00000016233"/>
<dbReference type="GlyCosmos" id="Q95LB0">
    <property type="glycosylation" value="6 sites, No reported glycans"/>
</dbReference>
<dbReference type="PaxDb" id="9598-ENSPTRP00000016233"/>
<dbReference type="Ensembl" id="ENSPTRT00000017524.4">
    <property type="protein sequence ID" value="ENSPTRP00000016233.3"/>
    <property type="gene ID" value="ENSPTRG00000009556.5"/>
</dbReference>
<dbReference type="GeneID" id="468459"/>
<dbReference type="CTD" id="350"/>
<dbReference type="VGNC" id="VGNC:6341">
    <property type="gene designation" value="APOH"/>
</dbReference>
<dbReference type="eggNOG" id="KOG4297">
    <property type="taxonomic scope" value="Eukaryota"/>
</dbReference>
<dbReference type="GeneTree" id="ENSGT00940000157228"/>
<dbReference type="HOGENOM" id="CLU_020107_2_0_1"/>
<dbReference type="InParanoid" id="Q95LB0"/>
<dbReference type="OMA" id="NWSEKPS"/>
<dbReference type="OrthoDB" id="413at9604"/>
<dbReference type="TreeFam" id="TF334137"/>
<dbReference type="Proteomes" id="UP000002277">
    <property type="component" value="Chromosome 17"/>
</dbReference>
<dbReference type="Bgee" id="ENSPTRG00000009556">
    <property type="expression patterns" value="Expressed in liver and 16 other cell types or tissues"/>
</dbReference>
<dbReference type="GO" id="GO:0009986">
    <property type="term" value="C:cell surface"/>
    <property type="evidence" value="ECO:0007669"/>
    <property type="project" value="Ensembl"/>
</dbReference>
<dbReference type="GO" id="GO:0042627">
    <property type="term" value="C:chylomicron"/>
    <property type="evidence" value="ECO:0007669"/>
    <property type="project" value="Ensembl"/>
</dbReference>
<dbReference type="GO" id="GO:0034364">
    <property type="term" value="C:high-density lipoprotein particle"/>
    <property type="evidence" value="ECO:0007669"/>
    <property type="project" value="Ensembl"/>
</dbReference>
<dbReference type="GO" id="GO:0034361">
    <property type="term" value="C:very-low-density lipoprotein particle"/>
    <property type="evidence" value="ECO:0007669"/>
    <property type="project" value="Ensembl"/>
</dbReference>
<dbReference type="GO" id="GO:0008201">
    <property type="term" value="F:heparin binding"/>
    <property type="evidence" value="ECO:0007669"/>
    <property type="project" value="UniProtKB-KW"/>
</dbReference>
<dbReference type="GO" id="GO:0042802">
    <property type="term" value="F:identical protein binding"/>
    <property type="evidence" value="ECO:0007669"/>
    <property type="project" value="Ensembl"/>
</dbReference>
<dbReference type="GO" id="GO:0060230">
    <property type="term" value="F:lipoprotein lipase activator activity"/>
    <property type="evidence" value="ECO:0007669"/>
    <property type="project" value="Ensembl"/>
</dbReference>
<dbReference type="GO" id="GO:0005543">
    <property type="term" value="F:phospholipid binding"/>
    <property type="evidence" value="ECO:0007669"/>
    <property type="project" value="Ensembl"/>
</dbReference>
<dbReference type="GO" id="GO:0007597">
    <property type="term" value="P:blood coagulation, intrinsic pathway"/>
    <property type="evidence" value="ECO:0007669"/>
    <property type="project" value="Ensembl"/>
</dbReference>
<dbReference type="GO" id="GO:0016525">
    <property type="term" value="P:negative regulation of angiogenesis"/>
    <property type="evidence" value="ECO:0007669"/>
    <property type="project" value="Ensembl"/>
</dbReference>
<dbReference type="GO" id="GO:0030195">
    <property type="term" value="P:negative regulation of blood coagulation"/>
    <property type="evidence" value="ECO:0007669"/>
    <property type="project" value="Ensembl"/>
</dbReference>
<dbReference type="GO" id="GO:0010596">
    <property type="term" value="P:negative regulation of endothelial cell migration"/>
    <property type="evidence" value="ECO:0007669"/>
    <property type="project" value="Ensembl"/>
</dbReference>
<dbReference type="GO" id="GO:0001937">
    <property type="term" value="P:negative regulation of endothelial cell proliferation"/>
    <property type="evidence" value="ECO:0007669"/>
    <property type="project" value="Ensembl"/>
</dbReference>
<dbReference type="GO" id="GO:0051918">
    <property type="term" value="P:negative regulation of fibrinolysis"/>
    <property type="evidence" value="ECO:0007669"/>
    <property type="project" value="Ensembl"/>
</dbReference>
<dbReference type="GO" id="GO:0033033">
    <property type="term" value="P:negative regulation of myeloid cell apoptotic process"/>
    <property type="evidence" value="ECO:0007669"/>
    <property type="project" value="Ensembl"/>
</dbReference>
<dbReference type="GO" id="GO:0034392">
    <property type="term" value="P:negative regulation of smooth muscle cell apoptotic process"/>
    <property type="evidence" value="ECO:0007669"/>
    <property type="project" value="Ensembl"/>
</dbReference>
<dbReference type="GO" id="GO:0031639">
    <property type="term" value="P:plasminogen activation"/>
    <property type="evidence" value="ECO:0007669"/>
    <property type="project" value="Ensembl"/>
</dbReference>
<dbReference type="GO" id="GO:0006641">
    <property type="term" value="P:triglyceride metabolic process"/>
    <property type="evidence" value="ECO:0007669"/>
    <property type="project" value="Ensembl"/>
</dbReference>
<dbReference type="CDD" id="cd00033">
    <property type="entry name" value="CCP"/>
    <property type="match status" value="4"/>
</dbReference>
<dbReference type="FunFam" id="2.10.70.10:FF:000083">
    <property type="entry name" value="Beta-2-glycoprotein 1"/>
    <property type="match status" value="1"/>
</dbReference>
<dbReference type="FunFam" id="2.10.70.10:FF:000089">
    <property type="entry name" value="Beta-2-glycoprotein 1"/>
    <property type="match status" value="1"/>
</dbReference>
<dbReference type="FunFam" id="2.10.70.10:FF:000091">
    <property type="entry name" value="Beta-2-glycoprotein 1"/>
    <property type="match status" value="1"/>
</dbReference>
<dbReference type="FunFam" id="2.10.70.10:FF:000096">
    <property type="entry name" value="Beta-2-glycoprotein 1"/>
    <property type="match status" value="1"/>
</dbReference>
<dbReference type="FunFam" id="2.10.70.10:FF:000122">
    <property type="entry name" value="Beta-2-glycoprotein 1"/>
    <property type="match status" value="1"/>
</dbReference>
<dbReference type="Gene3D" id="2.10.70.10">
    <property type="entry name" value="Complement Module, domain 1"/>
    <property type="match status" value="5"/>
</dbReference>
<dbReference type="InterPro" id="IPR050350">
    <property type="entry name" value="Compl-Cell_Adhes-Reg"/>
</dbReference>
<dbReference type="InterPro" id="IPR035976">
    <property type="entry name" value="Sushi/SCR/CCP_sf"/>
</dbReference>
<dbReference type="InterPro" id="IPR015104">
    <property type="entry name" value="Sushi_2"/>
</dbReference>
<dbReference type="InterPro" id="IPR000436">
    <property type="entry name" value="Sushi_SCR_CCP_dom"/>
</dbReference>
<dbReference type="PANTHER" id="PTHR19325:SF549">
    <property type="entry name" value="BETA-2-GLYCOPROTEIN 1"/>
    <property type="match status" value="1"/>
</dbReference>
<dbReference type="PANTHER" id="PTHR19325">
    <property type="entry name" value="COMPLEMENT COMPONENT-RELATED SUSHI DOMAIN-CONTAINING"/>
    <property type="match status" value="1"/>
</dbReference>
<dbReference type="Pfam" id="PF00084">
    <property type="entry name" value="Sushi"/>
    <property type="match status" value="4"/>
</dbReference>
<dbReference type="Pfam" id="PF09014">
    <property type="entry name" value="Sushi_2"/>
    <property type="match status" value="1"/>
</dbReference>
<dbReference type="SMART" id="SM00032">
    <property type="entry name" value="CCP"/>
    <property type="match status" value="4"/>
</dbReference>
<dbReference type="SUPFAM" id="SSF57535">
    <property type="entry name" value="Complement control module/SCR domain"/>
    <property type="match status" value="5"/>
</dbReference>
<dbReference type="PROSITE" id="PS50923">
    <property type="entry name" value="SUSHI"/>
    <property type="match status" value="4"/>
</dbReference>
<comment type="function">
    <text>Binds to various kinds of negatively charged substances such as heparin, phospholipids, and dextran sulfate. May prevent activation of the intrinsic blood coagulation cascade by binding to phospholipids on the surface of damaged cells.</text>
</comment>
<comment type="subcellular location">
    <subcellularLocation>
        <location evidence="1">Secreted</location>
    </subcellularLocation>
</comment>
<comment type="tissue specificity">
    <text>Expressed by the liver and secreted in plasma.</text>
</comment>
<reference key="1">
    <citation type="journal article" date="2001" name="Hum. Genet.">
        <title>Chimpanzee apolipoprotein H (beta2-glycoprotein I): report on the gene structure, a common polymorphism, and a high prevalence of antiphospholipid antibodies.</title>
        <authorList>
            <person name="Sanghera D.K."/>
            <person name="Nestlerode C.S."/>
            <person name="Ferrell R.E."/>
            <person name="Kamboh M.I."/>
        </authorList>
    </citation>
    <scope>NUCLEOTIDE SEQUENCE [GENOMIC DNA]</scope>
    <scope>VARIANT GLU-229</scope>
</reference>
<keyword id="KW-1015">Disulfide bond</keyword>
<keyword id="KW-0325">Glycoprotein</keyword>
<keyword id="KW-0358">Heparin-binding</keyword>
<keyword id="KW-1185">Reference proteome</keyword>
<keyword id="KW-0677">Repeat</keyword>
<keyword id="KW-0964">Secreted</keyword>
<keyword id="KW-0732">Signal</keyword>
<keyword id="KW-0768">Sushi</keyword>
<organism>
    <name type="scientific">Pan troglodytes</name>
    <name type="common">Chimpanzee</name>
    <dbReference type="NCBI Taxonomy" id="9598"/>
    <lineage>
        <taxon>Eukaryota</taxon>
        <taxon>Metazoa</taxon>
        <taxon>Chordata</taxon>
        <taxon>Craniata</taxon>
        <taxon>Vertebrata</taxon>
        <taxon>Euteleostomi</taxon>
        <taxon>Mammalia</taxon>
        <taxon>Eutheria</taxon>
        <taxon>Euarchontoglires</taxon>
        <taxon>Primates</taxon>
        <taxon>Haplorrhini</taxon>
        <taxon>Catarrhini</taxon>
        <taxon>Hominidae</taxon>
        <taxon>Pan</taxon>
    </lineage>
</organism>
<accession>Q95LB0</accession>
<proteinExistence type="evidence at transcript level"/>
<protein>
    <recommendedName>
        <fullName>Beta-2-glycoprotein 1</fullName>
    </recommendedName>
    <alternativeName>
        <fullName>Apolipoprotein H</fullName>
        <shortName>Apo-H</shortName>
    </alternativeName>
    <alternativeName>
        <fullName>Beta-2-glycoprotein I</fullName>
        <shortName>B2GPI</shortName>
        <shortName>Beta(2)GPI</shortName>
    </alternativeName>
</protein>
<evidence type="ECO:0000250" key="1"/>
<evidence type="ECO:0000250" key="2">
    <source>
        <dbReference type="UniProtKB" id="P17690"/>
    </source>
</evidence>
<evidence type="ECO:0000255" key="3"/>
<evidence type="ECO:0000255" key="4">
    <source>
        <dbReference type="PROSITE-ProRule" id="PRU00302"/>
    </source>
</evidence>
<evidence type="ECO:0000269" key="5">
    <source>
    </source>
</evidence>